<organism>
    <name type="scientific">Arabidopsis thaliana</name>
    <name type="common">Mouse-ear cress</name>
    <dbReference type="NCBI Taxonomy" id="3702"/>
    <lineage>
        <taxon>Eukaryota</taxon>
        <taxon>Viridiplantae</taxon>
        <taxon>Streptophyta</taxon>
        <taxon>Embryophyta</taxon>
        <taxon>Tracheophyta</taxon>
        <taxon>Spermatophyta</taxon>
        <taxon>Magnoliopsida</taxon>
        <taxon>eudicotyledons</taxon>
        <taxon>Gunneridae</taxon>
        <taxon>Pentapetalae</taxon>
        <taxon>rosids</taxon>
        <taxon>malvids</taxon>
        <taxon>Brassicales</taxon>
        <taxon>Brassicaceae</taxon>
        <taxon>Camelineae</taxon>
        <taxon>Arabidopsis</taxon>
    </lineage>
</organism>
<evidence type="ECO:0000255" key="1">
    <source>
        <dbReference type="PROSITE-ProRule" id="PRU00467"/>
    </source>
</evidence>
<proteinExistence type="evidence at transcript level"/>
<reference key="1">
    <citation type="journal article" date="1999" name="Nature">
        <title>Sequence and analysis of chromosome 2 of the plant Arabidopsis thaliana.</title>
        <authorList>
            <person name="Lin X."/>
            <person name="Kaul S."/>
            <person name="Rounsley S.D."/>
            <person name="Shea T.P."/>
            <person name="Benito M.-I."/>
            <person name="Town C.D."/>
            <person name="Fujii C.Y."/>
            <person name="Mason T.M."/>
            <person name="Bowman C.L."/>
            <person name="Barnstead M.E."/>
            <person name="Feldblyum T.V."/>
            <person name="Buell C.R."/>
            <person name="Ketchum K.A."/>
            <person name="Lee J.J."/>
            <person name="Ronning C.M."/>
            <person name="Koo H.L."/>
            <person name="Moffat K.S."/>
            <person name="Cronin L.A."/>
            <person name="Shen M."/>
            <person name="Pai G."/>
            <person name="Van Aken S."/>
            <person name="Umayam L."/>
            <person name="Tallon L.J."/>
            <person name="Gill J.E."/>
            <person name="Adams M.D."/>
            <person name="Carrera A.J."/>
            <person name="Creasy T.H."/>
            <person name="Goodman H.M."/>
            <person name="Somerville C.R."/>
            <person name="Copenhaver G.P."/>
            <person name="Preuss D."/>
            <person name="Nierman W.C."/>
            <person name="White O."/>
            <person name="Eisen J.A."/>
            <person name="Salzberg S.L."/>
            <person name="Fraser C.M."/>
            <person name="Venter J.C."/>
        </authorList>
    </citation>
    <scope>NUCLEOTIDE SEQUENCE [LARGE SCALE GENOMIC DNA]</scope>
    <source>
        <strain>cv. Columbia</strain>
    </source>
</reference>
<reference key="2">
    <citation type="journal article" date="2017" name="Plant J.">
        <title>Araport11: a complete reannotation of the Arabidopsis thaliana reference genome.</title>
        <authorList>
            <person name="Cheng C.Y."/>
            <person name="Krishnakumar V."/>
            <person name="Chan A.P."/>
            <person name="Thibaud-Nissen F."/>
            <person name="Schobel S."/>
            <person name="Town C.D."/>
        </authorList>
    </citation>
    <scope>GENOME REANNOTATION</scope>
    <source>
        <strain>cv. Columbia</strain>
    </source>
</reference>
<reference key="3">
    <citation type="journal article" date="2003" name="Science">
        <title>Empirical analysis of transcriptional activity in the Arabidopsis genome.</title>
        <authorList>
            <person name="Yamada K."/>
            <person name="Lim J."/>
            <person name="Dale J.M."/>
            <person name="Chen H."/>
            <person name="Shinn P."/>
            <person name="Palm C.J."/>
            <person name="Southwick A.M."/>
            <person name="Wu H.C."/>
            <person name="Kim C.J."/>
            <person name="Nguyen M."/>
            <person name="Pham P.K."/>
            <person name="Cheuk R.F."/>
            <person name="Karlin-Newmann G."/>
            <person name="Liu S.X."/>
            <person name="Lam B."/>
            <person name="Sakano H."/>
            <person name="Wu T."/>
            <person name="Yu G."/>
            <person name="Miranda M."/>
            <person name="Quach H.L."/>
            <person name="Tripp M."/>
            <person name="Chang C.H."/>
            <person name="Lee J.M."/>
            <person name="Toriumi M.J."/>
            <person name="Chan M.M."/>
            <person name="Tang C.C."/>
            <person name="Onodera C.S."/>
            <person name="Deng J.M."/>
            <person name="Akiyama K."/>
            <person name="Ansari Y."/>
            <person name="Arakawa T."/>
            <person name="Banh J."/>
            <person name="Banno F."/>
            <person name="Bowser L."/>
            <person name="Brooks S.Y."/>
            <person name="Carninci P."/>
            <person name="Chao Q."/>
            <person name="Choy N."/>
            <person name="Enju A."/>
            <person name="Goldsmith A.D."/>
            <person name="Gurjal M."/>
            <person name="Hansen N.F."/>
            <person name="Hayashizaki Y."/>
            <person name="Johnson-Hopson C."/>
            <person name="Hsuan V.W."/>
            <person name="Iida K."/>
            <person name="Karnes M."/>
            <person name="Khan S."/>
            <person name="Koesema E."/>
            <person name="Ishida J."/>
            <person name="Jiang P.X."/>
            <person name="Jones T."/>
            <person name="Kawai J."/>
            <person name="Kamiya A."/>
            <person name="Meyers C."/>
            <person name="Nakajima M."/>
            <person name="Narusaka M."/>
            <person name="Seki M."/>
            <person name="Sakurai T."/>
            <person name="Satou M."/>
            <person name="Tamse R."/>
            <person name="Vaysberg M."/>
            <person name="Wallender E.K."/>
            <person name="Wong C."/>
            <person name="Yamamura Y."/>
            <person name="Yuan S."/>
            <person name="Shinozaki K."/>
            <person name="Davis R.W."/>
            <person name="Theologis A."/>
            <person name="Ecker J.R."/>
        </authorList>
    </citation>
    <scope>NUCLEOTIDE SEQUENCE [LARGE SCALE MRNA]</scope>
    <source>
        <strain>cv. Columbia</strain>
    </source>
</reference>
<reference key="4">
    <citation type="submission" date="2002-03" db="EMBL/GenBank/DDBJ databases">
        <title>Full-length cDNA from Arabidopsis thaliana.</title>
        <authorList>
            <person name="Brover V.V."/>
            <person name="Troukhan M.E."/>
            <person name="Alexandrov N.A."/>
            <person name="Lu Y.-P."/>
            <person name="Flavell R.B."/>
            <person name="Feldmann K.A."/>
        </authorList>
    </citation>
    <scope>NUCLEOTIDE SEQUENCE [LARGE SCALE MRNA]</scope>
</reference>
<keyword id="KW-1185">Reference proteome</keyword>
<name>AMERL_ARATH</name>
<accession>Q9ZVJ2</accession>
<dbReference type="EMBL" id="AC005499">
    <property type="protein sequence ID" value="AAC67347.1"/>
    <property type="molecule type" value="Genomic_DNA"/>
</dbReference>
<dbReference type="EMBL" id="CP002685">
    <property type="protein sequence ID" value="AEC09575.1"/>
    <property type="molecule type" value="Genomic_DNA"/>
</dbReference>
<dbReference type="EMBL" id="CP002685">
    <property type="protein sequence ID" value="AEC09576.1"/>
    <property type="molecule type" value="Genomic_DNA"/>
</dbReference>
<dbReference type="EMBL" id="CP002685">
    <property type="protein sequence ID" value="ANM62902.1"/>
    <property type="molecule type" value="Genomic_DNA"/>
</dbReference>
<dbReference type="EMBL" id="CP002685">
    <property type="protein sequence ID" value="ANM62903.1"/>
    <property type="molecule type" value="Genomic_DNA"/>
</dbReference>
<dbReference type="EMBL" id="AY127005">
    <property type="protein sequence ID" value="AAM83232.1"/>
    <property type="molecule type" value="mRNA"/>
</dbReference>
<dbReference type="EMBL" id="BT000577">
    <property type="protein sequence ID" value="AAN18146.1"/>
    <property type="molecule type" value="mRNA"/>
</dbReference>
<dbReference type="EMBL" id="AY085766">
    <property type="protein sequence ID" value="AAM62983.1"/>
    <property type="molecule type" value="mRNA"/>
</dbReference>
<dbReference type="PIR" id="D84808">
    <property type="entry name" value="D84808"/>
</dbReference>
<dbReference type="RefSeq" id="NP_001031509.1">
    <property type="nucleotide sequence ID" value="NM_001036432.2"/>
</dbReference>
<dbReference type="RefSeq" id="NP_001325027.1">
    <property type="nucleotide sequence ID" value="NM_001336722.1"/>
</dbReference>
<dbReference type="RefSeq" id="NP_001325028.1">
    <property type="nucleotide sequence ID" value="NM_001336723.1"/>
</dbReference>
<dbReference type="RefSeq" id="NP_565894.1">
    <property type="nucleotide sequence ID" value="NM_129428.4"/>
</dbReference>
<dbReference type="SMR" id="Q9ZVJ2"/>
<dbReference type="FunCoup" id="Q9ZVJ2">
    <property type="interactions" value="4323"/>
</dbReference>
<dbReference type="STRING" id="3702.Q9ZVJ2"/>
<dbReference type="PaxDb" id="3702-AT2G38710.2"/>
<dbReference type="ProteomicsDB" id="244926"/>
<dbReference type="EnsemblPlants" id="AT2G38710.1">
    <property type="protein sequence ID" value="AT2G38710.1"/>
    <property type="gene ID" value="AT2G38710"/>
</dbReference>
<dbReference type="EnsemblPlants" id="AT2G38710.2">
    <property type="protein sequence ID" value="AT2G38710.2"/>
    <property type="gene ID" value="AT2G38710"/>
</dbReference>
<dbReference type="EnsemblPlants" id="AT2G38710.3">
    <property type="protein sequence ID" value="AT2G38710.3"/>
    <property type="gene ID" value="AT2G38710"/>
</dbReference>
<dbReference type="EnsemblPlants" id="AT2G38710.4">
    <property type="protein sequence ID" value="AT2G38710.4"/>
    <property type="gene ID" value="AT2G38710"/>
</dbReference>
<dbReference type="GeneID" id="818453"/>
<dbReference type="Gramene" id="AT2G38710.1">
    <property type="protein sequence ID" value="AT2G38710.1"/>
    <property type="gene ID" value="AT2G38710"/>
</dbReference>
<dbReference type="Gramene" id="AT2G38710.2">
    <property type="protein sequence ID" value="AT2G38710.2"/>
    <property type="gene ID" value="AT2G38710"/>
</dbReference>
<dbReference type="Gramene" id="AT2G38710.3">
    <property type="protein sequence ID" value="AT2G38710.3"/>
    <property type="gene ID" value="AT2G38710"/>
</dbReference>
<dbReference type="Gramene" id="AT2G38710.4">
    <property type="protein sequence ID" value="AT2G38710.4"/>
    <property type="gene ID" value="AT2G38710"/>
</dbReference>
<dbReference type="KEGG" id="ath:AT2G38710"/>
<dbReference type="Araport" id="AT2G38710"/>
<dbReference type="TAIR" id="AT2G38710"/>
<dbReference type="eggNOG" id="KOG3274">
    <property type="taxonomic scope" value="Eukaryota"/>
</dbReference>
<dbReference type="HOGENOM" id="CLU_052828_1_1_1"/>
<dbReference type="InParanoid" id="Q9ZVJ2"/>
<dbReference type="OMA" id="LFITWNK"/>
<dbReference type="OrthoDB" id="24630at2759"/>
<dbReference type="PhylomeDB" id="Q9ZVJ2"/>
<dbReference type="CD-CODE" id="4299E36E">
    <property type="entry name" value="Nucleolus"/>
</dbReference>
<dbReference type="PRO" id="PR:Q9ZVJ2"/>
<dbReference type="Proteomes" id="UP000006548">
    <property type="component" value="Chromosome 2"/>
</dbReference>
<dbReference type="ExpressionAtlas" id="Q9ZVJ2">
    <property type="expression patterns" value="baseline and differential"/>
</dbReference>
<dbReference type="FunFam" id="3.30.700.20:FF:000001">
    <property type="entry name" value="AMME syndrome candidate gene 1"/>
    <property type="match status" value="1"/>
</dbReference>
<dbReference type="Gene3D" id="3.30.700.20">
    <property type="entry name" value="Hypothetical protein ph0010, domain 1"/>
    <property type="match status" value="1"/>
</dbReference>
<dbReference type="InterPro" id="IPR023473">
    <property type="entry name" value="AMMECR1"/>
</dbReference>
<dbReference type="InterPro" id="IPR036071">
    <property type="entry name" value="AMMECR1_dom_sf"/>
</dbReference>
<dbReference type="InterPro" id="IPR002733">
    <property type="entry name" value="AMMECR1_domain"/>
</dbReference>
<dbReference type="InterPro" id="IPR027485">
    <property type="entry name" value="AMMECR1_N"/>
</dbReference>
<dbReference type="NCBIfam" id="TIGR00296">
    <property type="entry name" value="TIGR00296 family protein"/>
    <property type="match status" value="1"/>
</dbReference>
<dbReference type="PANTHER" id="PTHR13016:SF0">
    <property type="entry name" value="AMME SYNDROME CANDIDATE GENE 1 PROTEIN"/>
    <property type="match status" value="1"/>
</dbReference>
<dbReference type="PANTHER" id="PTHR13016">
    <property type="entry name" value="AMMECR1 HOMOLOG"/>
    <property type="match status" value="1"/>
</dbReference>
<dbReference type="Pfam" id="PF01871">
    <property type="entry name" value="AMMECR1"/>
    <property type="match status" value="1"/>
</dbReference>
<dbReference type="SUPFAM" id="SSF143447">
    <property type="entry name" value="AMMECR1-like"/>
    <property type="match status" value="1"/>
</dbReference>
<dbReference type="PROSITE" id="PS51112">
    <property type="entry name" value="AMMECR1"/>
    <property type="match status" value="1"/>
</dbReference>
<gene>
    <name type="ordered locus">At2g38710</name>
    <name type="ORF">T6A23.9</name>
</gene>
<sequence length="214" mass="24245">MVSANREMAVYCFDTLVSHYNNEETPPPAFEEANHPLFVTWKKIVNGGEPRLRGCIGTLEARRLISGFKDYALTSALRDRRFPPIQAKELPSLQCTVSVLTDYEDAEDYLDWEVGKHGIIIEFTEPETNTKRSATYLPEVPAHEGWTKIEAIDSLVRKAGYNGVITEAVRRRINLTRYQSTLFSMHYSEYLSYVKATRGVVGPVINGINKHAFA</sequence>
<protein>
    <recommendedName>
        <fullName>Uncharacterized protein At2g38710</fullName>
    </recommendedName>
</protein>
<feature type="chain" id="PRO_0000142370" description="Uncharacterized protein At2g38710">
    <location>
        <begin position="1"/>
        <end position="214"/>
    </location>
</feature>
<feature type="domain" description="AMMECR1" evidence="1">
    <location>
        <begin position="1"/>
        <end position="194"/>
    </location>
</feature>